<evidence type="ECO:0000255" key="1">
    <source>
        <dbReference type="HAMAP-Rule" id="MF_00102"/>
    </source>
</evidence>
<evidence type="ECO:0000305" key="2"/>
<comment type="function">
    <text evidence="1">Catalyzes the conversion of 4-hydroxy-tetrahydrodipicolinate (HTPA) to tetrahydrodipicolinate.</text>
</comment>
<comment type="catalytic activity">
    <reaction evidence="1">
        <text>(S)-2,3,4,5-tetrahydrodipicolinate + NAD(+) + H2O = (2S,4S)-4-hydroxy-2,3,4,5-tetrahydrodipicolinate + NADH + H(+)</text>
        <dbReference type="Rhea" id="RHEA:35323"/>
        <dbReference type="ChEBI" id="CHEBI:15377"/>
        <dbReference type="ChEBI" id="CHEBI:15378"/>
        <dbReference type="ChEBI" id="CHEBI:16845"/>
        <dbReference type="ChEBI" id="CHEBI:57540"/>
        <dbReference type="ChEBI" id="CHEBI:57945"/>
        <dbReference type="ChEBI" id="CHEBI:67139"/>
        <dbReference type="EC" id="1.17.1.8"/>
    </reaction>
</comment>
<comment type="catalytic activity">
    <reaction evidence="1">
        <text>(S)-2,3,4,5-tetrahydrodipicolinate + NADP(+) + H2O = (2S,4S)-4-hydroxy-2,3,4,5-tetrahydrodipicolinate + NADPH + H(+)</text>
        <dbReference type="Rhea" id="RHEA:35331"/>
        <dbReference type="ChEBI" id="CHEBI:15377"/>
        <dbReference type="ChEBI" id="CHEBI:15378"/>
        <dbReference type="ChEBI" id="CHEBI:16845"/>
        <dbReference type="ChEBI" id="CHEBI:57783"/>
        <dbReference type="ChEBI" id="CHEBI:58349"/>
        <dbReference type="ChEBI" id="CHEBI:67139"/>
        <dbReference type="EC" id="1.17.1.8"/>
    </reaction>
</comment>
<comment type="pathway">
    <text evidence="1">Amino-acid biosynthesis; L-lysine biosynthesis via DAP pathway; (S)-tetrahydrodipicolinate from L-aspartate: step 4/4.</text>
</comment>
<comment type="subcellular location">
    <subcellularLocation>
        <location evidence="1">Cytoplasm</location>
    </subcellularLocation>
</comment>
<comment type="similarity">
    <text evidence="1">Belongs to the DapB family.</text>
</comment>
<comment type="caution">
    <text evidence="2">Was originally thought to be a dihydrodipicolinate reductase (DHDPR), catalyzing the conversion of dihydrodipicolinate to tetrahydrodipicolinate. However, it was shown in E.coli that the substrate of the enzymatic reaction is not dihydrodipicolinate (DHDP) but in fact (2S,4S)-4-hydroxy-2,3,4,5-tetrahydrodipicolinic acid (HTPA), the product released by the DapA-catalyzed reaction.</text>
</comment>
<reference key="1">
    <citation type="journal article" date="2008" name="PLoS ONE">
        <title>Environmental adaptation: genomic analysis of the piezotolerant and psychrotolerant deep-sea iron reducing bacterium Shewanella piezotolerans WP3.</title>
        <authorList>
            <person name="Wang F."/>
            <person name="Wang J."/>
            <person name="Jian H."/>
            <person name="Zhang B."/>
            <person name="Li S."/>
            <person name="Wang F."/>
            <person name="Zeng X."/>
            <person name="Gao L."/>
            <person name="Bartlett D.H."/>
            <person name="Yu J."/>
            <person name="Hu S."/>
            <person name="Xiao X."/>
        </authorList>
    </citation>
    <scope>NUCLEOTIDE SEQUENCE [LARGE SCALE GENOMIC DNA]</scope>
    <source>
        <strain>WP3 / JCM 13877</strain>
    </source>
</reference>
<proteinExistence type="inferred from homology"/>
<organism>
    <name type="scientific">Shewanella piezotolerans (strain WP3 / JCM 13877)</name>
    <dbReference type="NCBI Taxonomy" id="225849"/>
    <lineage>
        <taxon>Bacteria</taxon>
        <taxon>Pseudomonadati</taxon>
        <taxon>Pseudomonadota</taxon>
        <taxon>Gammaproteobacteria</taxon>
        <taxon>Alteromonadales</taxon>
        <taxon>Shewanellaceae</taxon>
        <taxon>Shewanella</taxon>
    </lineage>
</organism>
<feature type="chain" id="PRO_1000117376" description="4-hydroxy-tetrahydrodipicolinate reductase">
    <location>
        <begin position="1"/>
        <end position="271"/>
    </location>
</feature>
<feature type="active site" description="Proton donor/acceptor" evidence="1">
    <location>
        <position position="158"/>
    </location>
</feature>
<feature type="active site" description="Proton donor" evidence="1">
    <location>
        <position position="162"/>
    </location>
</feature>
<feature type="binding site" evidence="1">
    <location>
        <begin position="11"/>
        <end position="16"/>
    </location>
    <ligand>
        <name>NAD(+)</name>
        <dbReference type="ChEBI" id="CHEBI:57540"/>
    </ligand>
</feature>
<feature type="binding site" evidence="1">
    <location>
        <position position="37"/>
    </location>
    <ligand>
        <name>NAD(+)</name>
        <dbReference type="ChEBI" id="CHEBI:57540"/>
    </ligand>
</feature>
<feature type="binding site" evidence="1">
    <location>
        <position position="38"/>
    </location>
    <ligand>
        <name>NADP(+)</name>
        <dbReference type="ChEBI" id="CHEBI:58349"/>
    </ligand>
</feature>
<feature type="binding site" evidence="1">
    <location>
        <begin position="101"/>
        <end position="103"/>
    </location>
    <ligand>
        <name>NAD(+)</name>
        <dbReference type="ChEBI" id="CHEBI:57540"/>
    </ligand>
</feature>
<feature type="binding site" evidence="1">
    <location>
        <begin position="125"/>
        <end position="128"/>
    </location>
    <ligand>
        <name>NAD(+)</name>
        <dbReference type="ChEBI" id="CHEBI:57540"/>
    </ligand>
</feature>
<feature type="binding site" evidence="1">
    <location>
        <position position="159"/>
    </location>
    <ligand>
        <name>(S)-2,3,4,5-tetrahydrodipicolinate</name>
        <dbReference type="ChEBI" id="CHEBI:16845"/>
    </ligand>
</feature>
<feature type="binding site" evidence="1">
    <location>
        <begin position="168"/>
        <end position="169"/>
    </location>
    <ligand>
        <name>(S)-2,3,4,5-tetrahydrodipicolinate</name>
        <dbReference type="ChEBI" id="CHEBI:16845"/>
    </ligand>
</feature>
<sequence length="271" mass="28934">MTERVRVAITGGSGRMGRTLIEAAKQNDAILLGAAIERAGSTLMGVDAGELAGVGAMNVAITDSLDKAVDDFDVLIDFTSPEASVIHTDWCAKHGKAIVIGTTGFNHAQKEQISAYSEQVPIVMAPNMAVGVNLMWKLLEVAAEVMGHYSDIEIIEGHHRYKKDAPSGTALKMGEVIAETLGRDLEKCAVYGREGITGERDRETIGFATVRAGDIVGEHTALFADIGERLEITHKASSRMTFANGAMRAASWLSAQGSGLYDMQQVLGLKE</sequence>
<protein>
    <recommendedName>
        <fullName evidence="1">4-hydroxy-tetrahydrodipicolinate reductase</fullName>
        <shortName evidence="1">HTPA reductase</shortName>
        <ecNumber evidence="1">1.17.1.8</ecNumber>
    </recommendedName>
</protein>
<dbReference type="EC" id="1.17.1.8" evidence="1"/>
<dbReference type="EMBL" id="CP000472">
    <property type="protein sequence ID" value="ACJ27996.1"/>
    <property type="molecule type" value="Genomic_DNA"/>
</dbReference>
<dbReference type="RefSeq" id="WP_020911374.1">
    <property type="nucleotide sequence ID" value="NC_011566.1"/>
</dbReference>
<dbReference type="SMR" id="B8CKF7"/>
<dbReference type="STRING" id="225849.swp_1200"/>
<dbReference type="KEGG" id="swp:swp_1200"/>
<dbReference type="eggNOG" id="COG0289">
    <property type="taxonomic scope" value="Bacteria"/>
</dbReference>
<dbReference type="HOGENOM" id="CLU_047479_2_1_6"/>
<dbReference type="OrthoDB" id="9790352at2"/>
<dbReference type="UniPathway" id="UPA00034">
    <property type="reaction ID" value="UER00018"/>
</dbReference>
<dbReference type="Proteomes" id="UP000000753">
    <property type="component" value="Chromosome"/>
</dbReference>
<dbReference type="GO" id="GO:0005829">
    <property type="term" value="C:cytosol"/>
    <property type="evidence" value="ECO:0007669"/>
    <property type="project" value="TreeGrafter"/>
</dbReference>
<dbReference type="GO" id="GO:0008839">
    <property type="term" value="F:4-hydroxy-tetrahydrodipicolinate reductase"/>
    <property type="evidence" value="ECO:0007669"/>
    <property type="project" value="UniProtKB-EC"/>
</dbReference>
<dbReference type="GO" id="GO:0051287">
    <property type="term" value="F:NAD binding"/>
    <property type="evidence" value="ECO:0007669"/>
    <property type="project" value="UniProtKB-UniRule"/>
</dbReference>
<dbReference type="GO" id="GO:0050661">
    <property type="term" value="F:NADP binding"/>
    <property type="evidence" value="ECO:0007669"/>
    <property type="project" value="UniProtKB-UniRule"/>
</dbReference>
<dbReference type="GO" id="GO:0016726">
    <property type="term" value="F:oxidoreductase activity, acting on CH or CH2 groups, NAD or NADP as acceptor"/>
    <property type="evidence" value="ECO:0007669"/>
    <property type="project" value="UniProtKB-UniRule"/>
</dbReference>
<dbReference type="GO" id="GO:0019877">
    <property type="term" value="P:diaminopimelate biosynthetic process"/>
    <property type="evidence" value="ECO:0007669"/>
    <property type="project" value="UniProtKB-UniRule"/>
</dbReference>
<dbReference type="GO" id="GO:0009089">
    <property type="term" value="P:lysine biosynthetic process via diaminopimelate"/>
    <property type="evidence" value="ECO:0007669"/>
    <property type="project" value="UniProtKB-UniRule"/>
</dbReference>
<dbReference type="CDD" id="cd02274">
    <property type="entry name" value="DHDPR_N"/>
    <property type="match status" value="1"/>
</dbReference>
<dbReference type="FunFam" id="3.30.360.10:FF:000004">
    <property type="entry name" value="4-hydroxy-tetrahydrodipicolinate reductase"/>
    <property type="match status" value="1"/>
</dbReference>
<dbReference type="FunFam" id="3.40.50.720:FF:000048">
    <property type="entry name" value="4-hydroxy-tetrahydrodipicolinate reductase"/>
    <property type="match status" value="1"/>
</dbReference>
<dbReference type="Gene3D" id="3.30.360.10">
    <property type="entry name" value="Dihydrodipicolinate Reductase, domain 2"/>
    <property type="match status" value="1"/>
</dbReference>
<dbReference type="Gene3D" id="3.40.50.720">
    <property type="entry name" value="NAD(P)-binding Rossmann-like Domain"/>
    <property type="match status" value="1"/>
</dbReference>
<dbReference type="HAMAP" id="MF_00102">
    <property type="entry name" value="DapB"/>
    <property type="match status" value="1"/>
</dbReference>
<dbReference type="InterPro" id="IPR022663">
    <property type="entry name" value="DapB_C"/>
</dbReference>
<dbReference type="InterPro" id="IPR000846">
    <property type="entry name" value="DapB_N"/>
</dbReference>
<dbReference type="InterPro" id="IPR022664">
    <property type="entry name" value="DapB_N_CS"/>
</dbReference>
<dbReference type="InterPro" id="IPR023940">
    <property type="entry name" value="DHDPR_bac"/>
</dbReference>
<dbReference type="InterPro" id="IPR036291">
    <property type="entry name" value="NAD(P)-bd_dom_sf"/>
</dbReference>
<dbReference type="NCBIfam" id="TIGR00036">
    <property type="entry name" value="dapB"/>
    <property type="match status" value="1"/>
</dbReference>
<dbReference type="PANTHER" id="PTHR20836:SF0">
    <property type="entry name" value="4-HYDROXY-TETRAHYDRODIPICOLINATE REDUCTASE 1, CHLOROPLASTIC-RELATED"/>
    <property type="match status" value="1"/>
</dbReference>
<dbReference type="PANTHER" id="PTHR20836">
    <property type="entry name" value="DIHYDRODIPICOLINATE REDUCTASE"/>
    <property type="match status" value="1"/>
</dbReference>
<dbReference type="Pfam" id="PF05173">
    <property type="entry name" value="DapB_C"/>
    <property type="match status" value="1"/>
</dbReference>
<dbReference type="Pfam" id="PF01113">
    <property type="entry name" value="DapB_N"/>
    <property type="match status" value="1"/>
</dbReference>
<dbReference type="PIRSF" id="PIRSF000161">
    <property type="entry name" value="DHPR"/>
    <property type="match status" value="1"/>
</dbReference>
<dbReference type="SUPFAM" id="SSF55347">
    <property type="entry name" value="Glyceraldehyde-3-phosphate dehydrogenase-like, C-terminal domain"/>
    <property type="match status" value="1"/>
</dbReference>
<dbReference type="SUPFAM" id="SSF51735">
    <property type="entry name" value="NAD(P)-binding Rossmann-fold domains"/>
    <property type="match status" value="1"/>
</dbReference>
<dbReference type="PROSITE" id="PS01298">
    <property type="entry name" value="DAPB"/>
    <property type="match status" value="1"/>
</dbReference>
<gene>
    <name evidence="1" type="primary">dapB</name>
    <name type="ordered locus">swp_1200</name>
</gene>
<keyword id="KW-0028">Amino-acid biosynthesis</keyword>
<keyword id="KW-0963">Cytoplasm</keyword>
<keyword id="KW-0220">Diaminopimelate biosynthesis</keyword>
<keyword id="KW-0457">Lysine biosynthesis</keyword>
<keyword id="KW-0520">NAD</keyword>
<keyword id="KW-0521">NADP</keyword>
<keyword id="KW-0560">Oxidoreductase</keyword>
<accession>B8CKF7</accession>
<name>DAPB_SHEPW</name>